<organism>
    <name type="scientific">Crocosmia x crocosmiiflora</name>
    <name type="common">Montbretia</name>
    <name type="synonym">Crocosmia aurea x Crocosmia pottsii</name>
    <dbReference type="NCBI Taxonomy" id="1053288"/>
    <lineage>
        <taxon>Eukaryota</taxon>
        <taxon>Viridiplantae</taxon>
        <taxon>Streptophyta</taxon>
        <taxon>Embryophyta</taxon>
        <taxon>Tracheophyta</taxon>
        <taxon>Spermatophyta</taxon>
        <taxon>Magnoliopsida</taxon>
        <taxon>Liliopsida</taxon>
        <taxon>Asparagales</taxon>
        <taxon>Iridaceae</taxon>
        <taxon>Crocoideae</taxon>
        <taxon>Freesieae</taxon>
        <taxon>Crocosmia</taxon>
    </lineage>
</organism>
<keyword id="KW-0012">Acyltransferase</keyword>
<keyword id="KW-0808">Transferase</keyword>
<feature type="chain" id="PRO_0000448220" description="Myricetin 3-O-glucosyl 1,2-rhamnoside 6'-O-caffeoyltransferase AT2">
    <location>
        <begin position="1"/>
        <end position="433"/>
    </location>
</feature>
<feature type="active site" description="Proton acceptor" evidence="1">
    <location>
        <position position="157"/>
    </location>
</feature>
<feature type="active site" description="Proton acceptor" evidence="1">
    <location>
        <position position="375"/>
    </location>
</feature>
<proteinExistence type="evidence at protein level"/>
<evidence type="ECO:0000250" key="1">
    <source>
        <dbReference type="UniProtKB" id="Q8W1W9"/>
    </source>
</evidence>
<evidence type="ECO:0000269" key="2">
    <source>
    </source>
</evidence>
<evidence type="ECO:0000303" key="3">
    <source>
    </source>
</evidence>
<evidence type="ECO:0000305" key="4"/>
<accession>A0A2Z5CVK5</accession>
<sequence>MSFTVTKTAPAVITPSEPTPSGHILPLSFFDRLPFLRVFLVDMIMVYGHGDQPAKVIKEAVAKALVHYYPLAGRLTTDTDDGELSVACTGEGVWFVEATADCRMEDVNYLQVEPLMIPKEQILPSHPEGVDPYTLPFMIQVTQFRCGGFTFATRANHAVFDGIGAGQIKVAIGEMARGLKHPTVKPVWCRDVIRKPIPSQISATEPHDTDLSSIPDLKFTNNQTNIECCSFDLSLDHINHLKDHFAKEVGKICSVFDVIAAKLWQSRTRAIGLQPQTEVSLTFLLNIRQVVLHNELPPDGGYYGNCLVPLINKAPSGQIANAPLFEIVRLIKEAKDDLLSKDSASLIGEMPPYKKPSYADLSIVDWRRLGLYEADFGWGGPMFLVPLNEHTVTSCSTYLFKSPVASKKDVRLVTYCIVKEHLEAFRDEMNDFT</sequence>
<comment type="function">
    <text evidence="2">Caffeoyltransferase involved in montbretin A (MbA) biosynthesis (PubMed:29967287). Catalyzes the caffeoylation of myricetin 3-O-beta-D-glucosyl 1,2-alpha-L-rhamnoside (MRG) to produce myricetin 3-O-(6'-O-caffeoyl)-beta-D-glucosyl 1,2-alpha-L-rhamnoside (mini-MbA), a precursor of MbA (PubMed:29967287). Mini-MbA and MbA are potent inhibitors of human pancreatic alpha-amylase and are being developed as drug candidates to treat type-2 diabetes (PubMed:29967287). In vitro, is able to catalyze the caffeoylation of quercetin 3-O-sophoroside (QGG), although QGG may not be a physiological substrate in vivo (PubMed:29967287). In vitro, can use coumaryl-CoA, feruloyl-CoA and acetyl-CoA, although these three acyl donors may not be physiological in vivo (PubMed:29967287).</text>
</comment>
<comment type="catalytic activity">
    <reaction evidence="2">
        <text>myricetin 3-O-[beta-D-glucosyl-(1-&gt;2)-alpha-L-rhamnoside] + (E)-caffeoyl-CoA = myricetin 3-O-[(6-O-(E)-caffeoyl-beta-D-glucosyl)-(1-&gt;2)-alpha-L-rhamnoside] + CoA</text>
        <dbReference type="Rhea" id="RHEA:61152"/>
        <dbReference type="ChEBI" id="CHEBI:57287"/>
        <dbReference type="ChEBI" id="CHEBI:87136"/>
        <dbReference type="ChEBI" id="CHEBI:144428"/>
        <dbReference type="ChEBI" id="CHEBI:144429"/>
    </reaction>
    <physiologicalReaction direction="left-to-right" evidence="2">
        <dbReference type="Rhea" id="RHEA:61153"/>
    </physiologicalReaction>
</comment>
<comment type="pathway">
    <text evidence="4">Flavonoid metabolism.</text>
</comment>
<comment type="tissue specificity">
    <text evidence="2">Expressed in young cromes.</text>
</comment>
<comment type="similarity">
    <text evidence="4">Belongs to the plant acyltransferase family.</text>
</comment>
<dbReference type="EC" id="2.3.1.-" evidence="2"/>
<dbReference type="EMBL" id="MH365463">
    <property type="protein sequence ID" value="AXB26762.1"/>
    <property type="molecule type" value="mRNA"/>
</dbReference>
<dbReference type="SMR" id="A0A2Z5CVK5"/>
<dbReference type="GO" id="GO:0016746">
    <property type="term" value="F:acyltransferase activity"/>
    <property type="evidence" value="ECO:0007669"/>
    <property type="project" value="UniProtKB-KW"/>
</dbReference>
<dbReference type="Gene3D" id="3.30.559.10">
    <property type="entry name" value="Chloramphenicol acetyltransferase-like domain"/>
    <property type="match status" value="2"/>
</dbReference>
<dbReference type="InterPro" id="IPR023213">
    <property type="entry name" value="CAT-like_dom_sf"/>
</dbReference>
<dbReference type="InterPro" id="IPR050898">
    <property type="entry name" value="Plant_acyltransferase"/>
</dbReference>
<dbReference type="PANTHER" id="PTHR31147">
    <property type="entry name" value="ACYL TRANSFERASE 4"/>
    <property type="match status" value="1"/>
</dbReference>
<dbReference type="PANTHER" id="PTHR31147:SF1">
    <property type="entry name" value="ACYL TRANSFERASE 4"/>
    <property type="match status" value="1"/>
</dbReference>
<dbReference type="Pfam" id="PF02458">
    <property type="entry name" value="Transferase"/>
    <property type="match status" value="1"/>
</dbReference>
<gene>
    <name evidence="3" type="primary">AT2</name>
</gene>
<name>AT2_CROXC</name>
<reference key="1">
    <citation type="journal article" date="2018" name="Plant Cell">
        <title>Discovery of UDP-glycosyltransferases and BAHD-acyltransferases involved in the biosynthesis of the antidiabetic plant metabolite montbretin A.</title>
        <authorList>
            <person name="Irmisch S."/>
            <person name="Jo S."/>
            <person name="Roach C.R."/>
            <person name="Jancsik S."/>
            <person name="Man Saint Yuen M."/>
            <person name="Madilao L.L."/>
            <person name="O'Neil-Johnson M."/>
            <person name="Williams R."/>
            <person name="Withers S.G."/>
            <person name="Bohlmann J."/>
        </authorList>
    </citation>
    <scope>NUCLEOTIDE SEQUENCE [MRNA]</scope>
    <scope>FUNCTION</scope>
    <scope>CATALYTIC ACTIVITY</scope>
    <scope>TISSUE SPECIFICITY</scope>
</reference>
<protein>
    <recommendedName>
        <fullName evidence="4">Myricetin 3-O-glucosyl 1,2-rhamnoside 6'-O-caffeoyltransferase AT2</fullName>
        <ecNumber evidence="2">2.3.1.-</ecNumber>
    </recommendedName>
    <alternativeName>
        <fullName evidence="3">Acyltransferase 2</fullName>
        <shortName evidence="3">CcAT2</shortName>
    </alternativeName>
</protein>